<reference key="1">
    <citation type="journal article" date="1993" name="PCR Methods Appl.">
        <title>PCR amplification of SRY-related gene sequences reveals evolutionary conservation of the SRY-box motif.</title>
        <authorList>
            <person name="Coriat A.M."/>
            <person name="Mueller U."/>
            <person name="Harry J.L."/>
            <person name="Uwanogho D."/>
            <person name="Sharpe P.T."/>
        </authorList>
    </citation>
    <scope>NUCLEOTIDE SEQUENCE [GENOMIC DNA]</scope>
    <source>
        <tissue>Blood</tissue>
    </source>
</reference>
<organism>
    <name type="scientific">Gallus gallus</name>
    <name type="common">Chicken</name>
    <dbReference type="NCBI Taxonomy" id="9031"/>
    <lineage>
        <taxon>Eukaryota</taxon>
        <taxon>Metazoa</taxon>
        <taxon>Chordata</taxon>
        <taxon>Craniata</taxon>
        <taxon>Vertebrata</taxon>
        <taxon>Euteleostomi</taxon>
        <taxon>Archelosauria</taxon>
        <taxon>Archosauria</taxon>
        <taxon>Dinosauria</taxon>
        <taxon>Saurischia</taxon>
        <taxon>Theropoda</taxon>
        <taxon>Coelurosauria</taxon>
        <taxon>Aves</taxon>
        <taxon>Neognathae</taxon>
        <taxon>Galloanserae</taxon>
        <taxon>Galliformes</taxon>
        <taxon>Phasianidae</taxon>
        <taxon>Phasianinae</taxon>
        <taxon>Gallus</taxon>
    </lineage>
</organism>
<keyword id="KW-0238">DNA-binding</keyword>
<keyword id="KW-0539">Nucleus</keyword>
<keyword id="KW-1185">Reference proteome</keyword>
<proteinExistence type="inferred from homology"/>
<sequence length="54" mass="6574">MALENPKMHNSEISKRLGAEWKQLSEAEKRPFIDEAKRHRAMHMKEYPDYKYRP</sequence>
<name>CH01_CHICK</name>
<protein>
    <recommendedName>
        <fullName>SRY-related protein CH1</fullName>
    </recommendedName>
</protein>
<comment type="subcellular location">
    <subcellularLocation>
        <location evidence="1">Nucleus</location>
    </subcellularLocation>
</comment>
<dbReference type="EMBL" id="M86320">
    <property type="protein sequence ID" value="AAA48676.1"/>
    <property type="molecule type" value="Genomic_DNA"/>
</dbReference>
<dbReference type="PIR" id="I50190">
    <property type="entry name" value="I50190"/>
</dbReference>
<dbReference type="SMR" id="P40665"/>
<dbReference type="FunCoup" id="P40665">
    <property type="interactions" value="6"/>
</dbReference>
<dbReference type="InParanoid" id="P40665"/>
<dbReference type="Proteomes" id="UP000000539">
    <property type="component" value="Unassembled WGS sequence"/>
</dbReference>
<dbReference type="GO" id="GO:0005634">
    <property type="term" value="C:nucleus"/>
    <property type="evidence" value="ECO:0007669"/>
    <property type="project" value="UniProtKB-SubCell"/>
</dbReference>
<dbReference type="GO" id="GO:0003677">
    <property type="term" value="F:DNA binding"/>
    <property type="evidence" value="ECO:0007669"/>
    <property type="project" value="UniProtKB-KW"/>
</dbReference>
<dbReference type="FunFam" id="1.10.30.10:FF:000074">
    <property type="entry name" value="SRY-related protein AMA1"/>
    <property type="match status" value="1"/>
</dbReference>
<dbReference type="Gene3D" id="1.10.30.10">
    <property type="entry name" value="High mobility group box domain"/>
    <property type="match status" value="1"/>
</dbReference>
<dbReference type="InterPro" id="IPR009071">
    <property type="entry name" value="HMG_box_dom"/>
</dbReference>
<dbReference type="InterPro" id="IPR036910">
    <property type="entry name" value="HMG_box_dom_sf"/>
</dbReference>
<dbReference type="InterPro" id="IPR050140">
    <property type="entry name" value="SRY-related_HMG-box_TF-like"/>
</dbReference>
<dbReference type="PANTHER" id="PTHR10270:SF324">
    <property type="entry name" value="SOX DOMAIN-CONTAINING PROTEIN DICHAETE-RELATED"/>
    <property type="match status" value="1"/>
</dbReference>
<dbReference type="PANTHER" id="PTHR10270">
    <property type="entry name" value="SOX TRANSCRIPTION FACTOR"/>
    <property type="match status" value="1"/>
</dbReference>
<dbReference type="Pfam" id="PF00505">
    <property type="entry name" value="HMG_box"/>
    <property type="match status" value="1"/>
</dbReference>
<dbReference type="SMART" id="SM00398">
    <property type="entry name" value="HMG"/>
    <property type="match status" value="1"/>
</dbReference>
<dbReference type="SUPFAM" id="SSF47095">
    <property type="entry name" value="HMG-box"/>
    <property type="match status" value="1"/>
</dbReference>
<dbReference type="PROSITE" id="PS50118">
    <property type="entry name" value="HMG_BOX_2"/>
    <property type="match status" value="1"/>
</dbReference>
<feature type="chain" id="PRO_0000048779" description="SRY-related protein CH1">
    <location>
        <begin position="1" status="less than"/>
        <end position="54" status="greater than"/>
    </location>
</feature>
<feature type="DNA-binding region" description="HMG box" evidence="1">
    <location>
        <begin position="1" status="less than"/>
        <end position="54" status="greater than"/>
    </location>
</feature>
<feature type="non-terminal residue">
    <location>
        <position position="1"/>
    </location>
</feature>
<feature type="non-terminal residue">
    <location>
        <position position="54"/>
    </location>
</feature>
<accession>P40665</accession>
<evidence type="ECO:0000255" key="1">
    <source>
        <dbReference type="PROSITE-ProRule" id="PRU00267"/>
    </source>
</evidence>